<keyword id="KW-0963">Cytoplasm</keyword>
<keyword id="KW-0269">Exonuclease</keyword>
<keyword id="KW-0378">Hydrolase</keyword>
<keyword id="KW-0479">Metal-binding</keyword>
<keyword id="KW-0507">mRNA processing</keyword>
<keyword id="KW-0540">Nuclease</keyword>
<keyword id="KW-1185">Reference proteome</keyword>
<keyword id="KW-0677">Repeat</keyword>
<keyword id="KW-0853">WD repeat</keyword>
<proteinExistence type="inferred from homology"/>
<comment type="function">
    <text evidence="1">Catalytic subunit of the poly(A)-nuclease (PAN) deadenylation complex, one of two cytoplasmic mRNA deadenylases involved in mRNA turnover. PAN specifically shortens poly(A) tails of RNA and the activity is stimulated by poly(A)-binding protein PAB1. PAN deadenylation is followed by rapid degradation of the shortened mRNA tails by the CCR4-NOT complex. Deadenylated mRNAs are then degraded by two alternative mechanisms, namely exosome-mediated 3'-5' exonucleolytic degradation, or deadenylation-dependent mRNA decaping and subsequent 5'-3' exonucleolytic degradation by XRN1. May also be involved in post-transcriptional maturation of mRNA poly(A) tails.</text>
</comment>
<comment type="catalytic activity">
    <reaction evidence="1">
        <text>Exonucleolytic cleavage of poly(A) to 5'-AMP.</text>
        <dbReference type="EC" id="3.1.13.4"/>
    </reaction>
</comment>
<comment type="cofactor">
    <cofactor evidence="1">
        <name>a divalent metal cation</name>
        <dbReference type="ChEBI" id="CHEBI:60240"/>
    </cofactor>
    <text evidence="1">Binds 2 metal cations per subunit in the catalytic exonuclease domain.</text>
</comment>
<comment type="activity regulation">
    <text evidence="1">Positively regulated by the regulatory subunit PAN3.</text>
</comment>
<comment type="subunit">
    <text evidence="1">Forms a heterotrimer with an asymmetric homodimer of the regulatory subunit PAN3 to form the poly(A)-nuclease (PAN) deadenylation complex.</text>
</comment>
<comment type="subcellular location">
    <subcellularLocation>
        <location evidence="1">Cytoplasm</location>
    </subcellularLocation>
</comment>
<comment type="domain">
    <text evidence="1">Contains a pseudo-UCH domain. This ubiquitin C-terminal hydrolase (UCH)-like or ubiquitin specific protease (USP)-like domain is predicted to be catalytically inactive because it lacks the active site catalytic triad characteristic of thiol proteases, with residues at the equivalent structural positions that are incompatible with catalysis, and it cannot bind ubiquitin. It functions as a structural scaffold for intra- and intermolecular interactions in the complex.</text>
</comment>
<comment type="domain">
    <text evidence="1">The linker, or PAN3 interaction domain (PID), between the WD40 repeats and the pseudo-UCH domain mediates interaction with PAN3.</text>
</comment>
<comment type="similarity">
    <text evidence="1">Belongs to the peptidase C19 family. PAN2 subfamily.</text>
</comment>
<gene>
    <name evidence="1" type="primary">PAN2</name>
    <name type="ordered locus">CND04900</name>
</gene>
<dbReference type="EC" id="3.1.13.4" evidence="1"/>
<dbReference type="EMBL" id="AE017344">
    <property type="protein sequence ID" value="AAW43174.1"/>
    <property type="molecule type" value="Genomic_DNA"/>
</dbReference>
<dbReference type="RefSeq" id="XP_570481.1">
    <property type="nucleotide sequence ID" value="XM_570481.1"/>
</dbReference>
<dbReference type="SMR" id="P0CQ08"/>
<dbReference type="FunCoup" id="P0CQ08">
    <property type="interactions" value="367"/>
</dbReference>
<dbReference type="STRING" id="214684.P0CQ08"/>
<dbReference type="PaxDb" id="214684-P0CQ08"/>
<dbReference type="EnsemblFungi" id="AAW43174">
    <property type="protein sequence ID" value="AAW43174"/>
    <property type="gene ID" value="CND04900"/>
</dbReference>
<dbReference type="GeneID" id="3257027"/>
<dbReference type="KEGG" id="cne:CND04900"/>
<dbReference type="VEuPathDB" id="FungiDB:CND04900"/>
<dbReference type="eggNOG" id="KOG1275">
    <property type="taxonomic scope" value="Eukaryota"/>
</dbReference>
<dbReference type="HOGENOM" id="CLU_002369_1_0_1"/>
<dbReference type="InParanoid" id="P0CQ08"/>
<dbReference type="OMA" id="TQELLWT"/>
<dbReference type="OrthoDB" id="16516at2759"/>
<dbReference type="PHI-base" id="PHI:11073"/>
<dbReference type="Proteomes" id="UP000002149">
    <property type="component" value="Chromosome 4"/>
</dbReference>
<dbReference type="GO" id="GO:0000932">
    <property type="term" value="C:P-body"/>
    <property type="evidence" value="ECO:0000318"/>
    <property type="project" value="GO_Central"/>
</dbReference>
<dbReference type="GO" id="GO:0031251">
    <property type="term" value="C:PAN complex"/>
    <property type="evidence" value="ECO:0000318"/>
    <property type="project" value="GO_Central"/>
</dbReference>
<dbReference type="GO" id="GO:0046872">
    <property type="term" value="F:metal ion binding"/>
    <property type="evidence" value="ECO:0007669"/>
    <property type="project" value="UniProtKB-KW"/>
</dbReference>
<dbReference type="GO" id="GO:0003676">
    <property type="term" value="F:nucleic acid binding"/>
    <property type="evidence" value="ECO:0007669"/>
    <property type="project" value="InterPro"/>
</dbReference>
<dbReference type="GO" id="GO:0004535">
    <property type="term" value="F:poly(A)-specific ribonuclease activity"/>
    <property type="evidence" value="ECO:0007669"/>
    <property type="project" value="UniProtKB-UniRule"/>
</dbReference>
<dbReference type="GO" id="GO:0006397">
    <property type="term" value="P:mRNA processing"/>
    <property type="evidence" value="ECO:0007669"/>
    <property type="project" value="UniProtKB-KW"/>
</dbReference>
<dbReference type="GO" id="GO:0000289">
    <property type="term" value="P:nuclear-transcribed mRNA poly(A) tail shortening"/>
    <property type="evidence" value="ECO:0000318"/>
    <property type="project" value="GO_Central"/>
</dbReference>
<dbReference type="CDD" id="cd06143">
    <property type="entry name" value="PAN2_exo"/>
    <property type="match status" value="1"/>
</dbReference>
<dbReference type="CDD" id="cd02672">
    <property type="entry name" value="Peptidase_C19P"/>
    <property type="match status" value="1"/>
</dbReference>
<dbReference type="FunFam" id="3.30.420.10:FF:000028">
    <property type="entry name" value="PAN2-PAN3 deadenylation complex catalytic subunit PAN2"/>
    <property type="match status" value="1"/>
</dbReference>
<dbReference type="FunFam" id="3.90.70.10:FF:000162">
    <property type="entry name" value="PAN2-PAN3 deadenylation complex catalytic subunit PAN2"/>
    <property type="match status" value="1"/>
</dbReference>
<dbReference type="Gene3D" id="3.90.70.10">
    <property type="entry name" value="Cysteine proteinases"/>
    <property type="match status" value="1"/>
</dbReference>
<dbReference type="Gene3D" id="3.30.420.10">
    <property type="entry name" value="Ribonuclease H-like superfamily/Ribonuclease H"/>
    <property type="match status" value="1"/>
</dbReference>
<dbReference type="Gene3D" id="2.130.10.10">
    <property type="entry name" value="YVTN repeat-like/Quinoprotein amine dehydrogenase"/>
    <property type="match status" value="1"/>
</dbReference>
<dbReference type="HAMAP" id="MF_03182">
    <property type="entry name" value="PAN2"/>
    <property type="match status" value="1"/>
</dbReference>
<dbReference type="InterPro" id="IPR013520">
    <property type="entry name" value="Exonuclease_RNaseT/DNA_pol3"/>
</dbReference>
<dbReference type="InterPro" id="IPR030843">
    <property type="entry name" value="PAN2"/>
</dbReference>
<dbReference type="InterPro" id="IPR050785">
    <property type="entry name" value="PAN2-PAN3_catalytic_subunit"/>
</dbReference>
<dbReference type="InterPro" id="IPR048841">
    <property type="entry name" value="PAN2_N"/>
</dbReference>
<dbReference type="InterPro" id="IPR028881">
    <property type="entry name" value="PAN2_UCH_dom"/>
</dbReference>
<dbReference type="InterPro" id="IPR038765">
    <property type="entry name" value="Papain-like_cys_pep_sf"/>
</dbReference>
<dbReference type="InterPro" id="IPR011047">
    <property type="entry name" value="Quinoprotein_ADH-like_sf"/>
</dbReference>
<dbReference type="InterPro" id="IPR012337">
    <property type="entry name" value="RNaseH-like_sf"/>
</dbReference>
<dbReference type="InterPro" id="IPR036397">
    <property type="entry name" value="RNaseH_sf"/>
</dbReference>
<dbReference type="InterPro" id="IPR028889">
    <property type="entry name" value="USP_dom"/>
</dbReference>
<dbReference type="InterPro" id="IPR015943">
    <property type="entry name" value="WD40/YVTN_repeat-like_dom_sf"/>
</dbReference>
<dbReference type="InterPro" id="IPR001680">
    <property type="entry name" value="WD40_rpt"/>
</dbReference>
<dbReference type="PANTHER" id="PTHR15728">
    <property type="entry name" value="DEADENYLATION COMPLEX CATALYTIC SUBUNIT PAN2"/>
    <property type="match status" value="1"/>
</dbReference>
<dbReference type="PANTHER" id="PTHR15728:SF0">
    <property type="entry name" value="PAN2-PAN3 DEADENYLATION COMPLEX CATALYTIC SUBUNIT PAN2"/>
    <property type="match status" value="1"/>
</dbReference>
<dbReference type="Pfam" id="PF20770">
    <property type="entry name" value="PAN2_N"/>
    <property type="match status" value="1"/>
</dbReference>
<dbReference type="Pfam" id="PF00929">
    <property type="entry name" value="RNase_T"/>
    <property type="match status" value="1"/>
</dbReference>
<dbReference type="Pfam" id="PF13423">
    <property type="entry name" value="UCH_1"/>
    <property type="match status" value="1"/>
</dbReference>
<dbReference type="SMART" id="SM00479">
    <property type="entry name" value="EXOIII"/>
    <property type="match status" value="1"/>
</dbReference>
<dbReference type="SMART" id="SM00320">
    <property type="entry name" value="WD40"/>
    <property type="match status" value="2"/>
</dbReference>
<dbReference type="SUPFAM" id="SSF54001">
    <property type="entry name" value="Cysteine proteinases"/>
    <property type="match status" value="1"/>
</dbReference>
<dbReference type="SUPFAM" id="SSF50998">
    <property type="entry name" value="Quinoprotein alcohol dehydrogenase-like"/>
    <property type="match status" value="1"/>
</dbReference>
<dbReference type="SUPFAM" id="SSF53098">
    <property type="entry name" value="Ribonuclease H-like"/>
    <property type="match status" value="1"/>
</dbReference>
<dbReference type="PROSITE" id="PS50235">
    <property type="entry name" value="USP_3"/>
    <property type="match status" value="1"/>
</dbReference>
<protein>
    <recommendedName>
        <fullName evidence="1">PAN2-PAN3 deadenylation complex catalytic subunit PAN2</fullName>
        <ecNumber evidence="1">3.1.13.4</ecNumber>
    </recommendedName>
    <alternativeName>
        <fullName evidence="1">PAB1P-dependent poly(A)-specific ribonuclease</fullName>
    </alternativeName>
    <alternativeName>
        <fullName evidence="1">Poly(A)-nuclease deadenylation complex subunit 2</fullName>
        <shortName evidence="1">PAN deadenylation complex subunit 2</shortName>
    </alternativeName>
</protein>
<organism>
    <name type="scientific">Cryptococcus neoformans var. neoformans serotype D (strain JEC21 / ATCC MYA-565)</name>
    <name type="common">Filobasidiella neoformans</name>
    <dbReference type="NCBI Taxonomy" id="214684"/>
    <lineage>
        <taxon>Eukaryota</taxon>
        <taxon>Fungi</taxon>
        <taxon>Dikarya</taxon>
        <taxon>Basidiomycota</taxon>
        <taxon>Agaricomycotina</taxon>
        <taxon>Tremellomycetes</taxon>
        <taxon>Tremellales</taxon>
        <taxon>Cryptococcaceae</taxon>
        <taxon>Cryptococcus</taxon>
        <taxon>Cryptococcus neoformans species complex</taxon>
    </lineage>
</organism>
<sequence length="1183" mass="130525">MNYNPLHLLPLPPTALDPKPIPTSLTLDPFSDVLWVGASSGIVSALCSPLTLARNVHFPAHGCKIGGGGFSAQGVSAVREVRVTDRDVWTLTEGGIGGRKRGGAPKWIVSDVTRSLRTMSPNPTNSHELITGGSGSLLLANTARGEVVRSIENSSPVVKLAPLHRTVLAAGLSGQVTVLDPRTGFKAAQNISPVQAHTGGLSGADVQGNIVATWGWTHMQGHPLPDPLIRLYDVRALRPLPPISFSSGPAFVLLHPSSSSHIVVSSQQGMLQTIDMSLGPSATVFQQLDVSSYITSMALSSRGDYLAFGDGDGQLHVWTTNETGENAAVDENGSIVLPPFNGYDGVKPEWPDQVDPLPTIAWEESTPLNLVGMPYYNEALLSQFPSECYATSTSPLFNPPATIPQPVLSSMKMVDFVGYAPNPKELRGKRYVLRAVPGAEGRARGKGRRDSGPRFRSEKDKKGTYKDKEEIEEELNDGEVPKYYRKVEIKYSKFGIEDFDFEFYNRTNYSGLETDILNSYTNSLLQALHYTLPLRAIATAHICVDCKKEHCLLCEAGFLFRMLEDAKGRNCQASNFSRAFSATSQAYALGLMDENTNSKSTAPYGSLIQNFNRWLLSTFSTESIVDGETFHLRPFPQKTSGLDGLSMNDGPSAIDQVLGVKIKTTNTCRHCGFVSSRDSTLHVVDLVYPKKMNPRLSFSDILRSSLIRDSTTKAICSSCKAFAPLDSRRSLSPSSGHPLPPVLSVNAMVTNSDVYGFWKDKKDVKEKDGVRRFLPKRVTIREVGKLENGQEEGVKYSIRSMVVQIQESPDAVAHLVSFVKMPSKDGSSAWIMFNDFLVRPVSEDEVLSFPDQWKVPAVIILERENAEELLNLEVLPKELDREILFKDVSIAWNRKQDMIKHKILQREEMPKRGTLVAIDAEFVALQQEEMEFRSDGTKNILRPSHMSLARVSVLRGEGEMEGKPFIDDYIHTSEAVVDYLTEFSGIKAGDLDPNNSPHTLVPLKVAYKKLRLLVDLGCIFVGHGLSKDFRTINIFVPPEQVMDTVLIYTLPGSQRKLSLRFLAWYLLHQDIQTNSHDSIEDAHFALLLCKLWMDYASESEEAFEIVMEDIFAEGKKLAFKPPSSAGNMMAEQQLSPVSFPPLSNGDQTVARAVVKSRMATPPPPTKLGLPQWASQNSPSPLRR</sequence>
<feature type="chain" id="PRO_0000295344" description="PAN2-PAN3 deadenylation complex catalytic subunit PAN2">
    <location>
        <begin position="1"/>
        <end position="1183"/>
    </location>
</feature>
<feature type="repeat" description="WD 1" evidence="1">
    <location>
        <begin position="150"/>
        <end position="189"/>
    </location>
</feature>
<feature type="repeat" description="WD 2" evidence="1">
    <location>
        <begin position="289"/>
        <end position="328"/>
    </location>
</feature>
<feature type="domain" description="USP" evidence="1">
    <location>
        <begin position="479"/>
        <end position="864"/>
    </location>
</feature>
<feature type="domain" description="Exonuclease" evidence="1">
    <location>
        <begin position="916"/>
        <end position="1085"/>
    </location>
</feature>
<feature type="region of interest" description="Linker" evidence="1">
    <location>
        <begin position="331"/>
        <end position="478"/>
    </location>
</feature>
<feature type="region of interest" description="Disordered" evidence="2">
    <location>
        <begin position="439"/>
        <end position="470"/>
    </location>
</feature>
<feature type="region of interest" description="Disordered" evidence="2">
    <location>
        <begin position="1155"/>
        <end position="1183"/>
    </location>
</feature>
<feature type="compositionally biased region" description="Basic and acidic residues" evidence="2">
    <location>
        <begin position="448"/>
        <end position="469"/>
    </location>
</feature>
<feature type="compositionally biased region" description="Polar residues" evidence="2">
    <location>
        <begin position="1172"/>
        <end position="1183"/>
    </location>
</feature>
<feature type="binding site" evidence="1">
    <location>
        <position position="919"/>
    </location>
    <ligand>
        <name>a divalent metal cation</name>
        <dbReference type="ChEBI" id="CHEBI:60240"/>
        <note>catalytic</note>
    </ligand>
</feature>
<feature type="binding site" evidence="1">
    <location>
        <position position="921"/>
    </location>
    <ligand>
        <name>a divalent metal cation</name>
        <dbReference type="ChEBI" id="CHEBI:60240"/>
        <note>catalytic</note>
    </ligand>
</feature>
<feature type="binding site" evidence="1">
    <location>
        <position position="1028"/>
    </location>
    <ligand>
        <name>a divalent metal cation</name>
        <dbReference type="ChEBI" id="CHEBI:60240"/>
        <note>catalytic</note>
    </ligand>
</feature>
<feature type="binding site" evidence="1">
    <location>
        <position position="1081"/>
    </location>
    <ligand>
        <name>a divalent metal cation</name>
        <dbReference type="ChEBI" id="CHEBI:60240"/>
        <note>catalytic</note>
    </ligand>
</feature>
<name>PAN2_CRYNJ</name>
<accession>P0CQ08</accession>
<accession>Q55UG2</accession>
<accession>Q5KHY2</accession>
<evidence type="ECO:0000255" key="1">
    <source>
        <dbReference type="HAMAP-Rule" id="MF_03182"/>
    </source>
</evidence>
<evidence type="ECO:0000256" key="2">
    <source>
        <dbReference type="SAM" id="MobiDB-lite"/>
    </source>
</evidence>
<reference key="1">
    <citation type="journal article" date="2005" name="Science">
        <title>The genome of the basidiomycetous yeast and human pathogen Cryptococcus neoformans.</title>
        <authorList>
            <person name="Loftus B.J."/>
            <person name="Fung E."/>
            <person name="Roncaglia P."/>
            <person name="Rowley D."/>
            <person name="Amedeo P."/>
            <person name="Bruno D."/>
            <person name="Vamathevan J."/>
            <person name="Miranda M."/>
            <person name="Anderson I.J."/>
            <person name="Fraser J.A."/>
            <person name="Allen J.E."/>
            <person name="Bosdet I.E."/>
            <person name="Brent M.R."/>
            <person name="Chiu R."/>
            <person name="Doering T.L."/>
            <person name="Donlin M.J."/>
            <person name="D'Souza C.A."/>
            <person name="Fox D.S."/>
            <person name="Grinberg V."/>
            <person name="Fu J."/>
            <person name="Fukushima M."/>
            <person name="Haas B.J."/>
            <person name="Huang J.C."/>
            <person name="Janbon G."/>
            <person name="Jones S.J.M."/>
            <person name="Koo H.L."/>
            <person name="Krzywinski M.I."/>
            <person name="Kwon-Chung K.J."/>
            <person name="Lengeler K.B."/>
            <person name="Maiti R."/>
            <person name="Marra M.A."/>
            <person name="Marra R.E."/>
            <person name="Mathewson C.A."/>
            <person name="Mitchell T.G."/>
            <person name="Pertea M."/>
            <person name="Riggs F.R."/>
            <person name="Salzberg S.L."/>
            <person name="Schein J.E."/>
            <person name="Shvartsbeyn A."/>
            <person name="Shin H."/>
            <person name="Shumway M."/>
            <person name="Specht C.A."/>
            <person name="Suh B.B."/>
            <person name="Tenney A."/>
            <person name="Utterback T.R."/>
            <person name="Wickes B.L."/>
            <person name="Wortman J.R."/>
            <person name="Wye N.H."/>
            <person name="Kronstad J.W."/>
            <person name="Lodge J.K."/>
            <person name="Heitman J."/>
            <person name="Davis R.W."/>
            <person name="Fraser C.M."/>
            <person name="Hyman R.W."/>
        </authorList>
    </citation>
    <scope>NUCLEOTIDE SEQUENCE [LARGE SCALE GENOMIC DNA]</scope>
    <source>
        <strain>JEC21 / ATCC MYA-565</strain>
    </source>
</reference>